<sequence length="173" mass="20180">MKISEYTKEMMDENSFIDLAYMALSEKGKEVNLYELIDEFKAIGNYSDEEVETRVVQFYTDLNTDGRFLSTGEYMWGLRDWYSVDDIEEKIAPTVQKFDILDEEDEDSPKIALLGEDEVEDELDLLPSDGDEENVDTEDEEVEDELDEAGLVVEPDEEFEDEEDEFDDEEEEE</sequence>
<proteinExistence type="inferred from homology"/>
<evidence type="ECO:0000255" key="1">
    <source>
        <dbReference type="HAMAP-Rule" id="MF_00357"/>
    </source>
</evidence>
<evidence type="ECO:0000255" key="2">
    <source>
        <dbReference type="PROSITE-ProRule" id="PRU01261"/>
    </source>
</evidence>
<evidence type="ECO:0000256" key="3">
    <source>
        <dbReference type="SAM" id="MobiDB-lite"/>
    </source>
</evidence>
<dbReference type="EMBL" id="AP009484">
    <property type="protein sequence ID" value="BAH18490.1"/>
    <property type="molecule type" value="Genomic_DNA"/>
</dbReference>
<dbReference type="RefSeq" id="WP_015912282.1">
    <property type="nucleotide sequence ID" value="NC_011999.1"/>
</dbReference>
<dbReference type="SMR" id="B9E8H2"/>
<dbReference type="STRING" id="458233.MCCL_1783"/>
<dbReference type="KEGG" id="mcl:MCCL_1783"/>
<dbReference type="eggNOG" id="COG3343">
    <property type="taxonomic scope" value="Bacteria"/>
</dbReference>
<dbReference type="HOGENOM" id="CLU_116648_1_0_9"/>
<dbReference type="OrthoDB" id="401223at2"/>
<dbReference type="Proteomes" id="UP000001383">
    <property type="component" value="Chromosome"/>
</dbReference>
<dbReference type="GO" id="GO:0000428">
    <property type="term" value="C:DNA-directed RNA polymerase complex"/>
    <property type="evidence" value="ECO:0007669"/>
    <property type="project" value="UniProtKB-KW"/>
</dbReference>
<dbReference type="GO" id="GO:0003899">
    <property type="term" value="F:DNA-directed RNA polymerase activity"/>
    <property type="evidence" value="ECO:0007669"/>
    <property type="project" value="UniProtKB-UniRule"/>
</dbReference>
<dbReference type="GO" id="GO:0006351">
    <property type="term" value="P:DNA-templated transcription"/>
    <property type="evidence" value="ECO:0007669"/>
    <property type="project" value="InterPro"/>
</dbReference>
<dbReference type="GO" id="GO:0006355">
    <property type="term" value="P:regulation of DNA-templated transcription"/>
    <property type="evidence" value="ECO:0007669"/>
    <property type="project" value="UniProtKB-UniRule"/>
</dbReference>
<dbReference type="Gene3D" id="1.10.10.1250">
    <property type="entry name" value="RNA polymerase, subunit delta, N-terminal domain"/>
    <property type="match status" value="1"/>
</dbReference>
<dbReference type="HAMAP" id="MF_00357">
    <property type="entry name" value="RNApol_bact_RpoE"/>
    <property type="match status" value="1"/>
</dbReference>
<dbReference type="InterPro" id="IPR007759">
    <property type="entry name" value="Asxl_HARE-HTH"/>
</dbReference>
<dbReference type="InterPro" id="IPR038087">
    <property type="entry name" value="RNAP_delta_N_dom_sf"/>
</dbReference>
<dbReference type="InterPro" id="IPR029757">
    <property type="entry name" value="RpoE"/>
</dbReference>
<dbReference type="NCBIfam" id="TIGR04567">
    <property type="entry name" value="RNAP_delt_lowGC"/>
    <property type="match status" value="1"/>
</dbReference>
<dbReference type="Pfam" id="PF05066">
    <property type="entry name" value="HARE-HTH"/>
    <property type="match status" value="1"/>
</dbReference>
<dbReference type="PROSITE" id="PS51913">
    <property type="entry name" value="HTH_HARE"/>
    <property type="match status" value="1"/>
</dbReference>
<keyword id="KW-0240">DNA-directed RNA polymerase</keyword>
<keyword id="KW-0548">Nucleotidyltransferase</keyword>
<keyword id="KW-1185">Reference proteome</keyword>
<keyword id="KW-0804">Transcription</keyword>
<keyword id="KW-0808">Transferase</keyword>
<organism>
    <name type="scientific">Macrococcus caseolyticus (strain JCSC5402)</name>
    <name type="common">Macrococcoides caseolyticum</name>
    <dbReference type="NCBI Taxonomy" id="458233"/>
    <lineage>
        <taxon>Bacteria</taxon>
        <taxon>Bacillati</taxon>
        <taxon>Bacillota</taxon>
        <taxon>Bacilli</taxon>
        <taxon>Bacillales</taxon>
        <taxon>Staphylococcaceae</taxon>
        <taxon>Macrococcoides</taxon>
    </lineage>
</organism>
<accession>B9E8H2</accession>
<reference key="1">
    <citation type="journal article" date="2009" name="J. Bacteriol.">
        <title>Complete genome sequence of Macrococcus caseolyticus strain JCSCS5402, reflecting the ancestral genome of the human-pathogenic staphylococci.</title>
        <authorList>
            <person name="Baba T."/>
            <person name="Kuwahara-Arai K."/>
            <person name="Uchiyama I."/>
            <person name="Takeuchi F."/>
            <person name="Ito T."/>
            <person name="Hiramatsu K."/>
        </authorList>
    </citation>
    <scope>NUCLEOTIDE SEQUENCE [LARGE SCALE GENOMIC DNA]</scope>
    <source>
        <strain>JCSC5402</strain>
    </source>
</reference>
<gene>
    <name evidence="1" type="primary">rpoE</name>
    <name type="ordered locus">MCCL_1783</name>
</gene>
<protein>
    <recommendedName>
        <fullName evidence="1">Probable DNA-directed RNA polymerase subunit delta</fullName>
    </recommendedName>
    <alternativeName>
        <fullName evidence="1">RNAP delta factor</fullName>
    </alternativeName>
</protein>
<name>RPOE_MACCJ</name>
<comment type="function">
    <text evidence="1">Participates in both the initiation and recycling phases of transcription. In the presence of the delta subunit, RNAP displays an increased specificity of transcription, a decreased affinity for nucleic acids, and an increased efficiency of RNA synthesis because of enhanced recycling.</text>
</comment>
<comment type="subunit">
    <text evidence="1">RNAP is composed of a core of 2 alpha, a beta and a beta' subunits. The core is associated with a delta subunit and one of several sigma factors.</text>
</comment>
<comment type="similarity">
    <text evidence="1">Belongs to the RpoE family.</text>
</comment>
<feature type="chain" id="PRO_1000133447" description="Probable DNA-directed RNA polymerase subunit delta">
    <location>
        <begin position="1"/>
        <end position="173"/>
    </location>
</feature>
<feature type="domain" description="HTH HARE-type" evidence="2">
    <location>
        <begin position="14"/>
        <end position="81"/>
    </location>
</feature>
<feature type="region of interest" description="Disordered" evidence="3">
    <location>
        <begin position="113"/>
        <end position="173"/>
    </location>
</feature>
<feature type="compositionally biased region" description="Acidic residues" evidence="3">
    <location>
        <begin position="115"/>
        <end position="173"/>
    </location>
</feature>